<proteinExistence type="inferred from homology"/>
<feature type="chain" id="PRO_1000201278" description="Lysophospholipid transporter LplT">
    <location>
        <begin position="1"/>
        <end position="400"/>
    </location>
</feature>
<feature type="transmembrane region" description="Helical" evidence="1">
    <location>
        <begin position="19"/>
        <end position="39"/>
    </location>
</feature>
<feature type="transmembrane region" description="Helical" evidence="1">
    <location>
        <begin position="53"/>
        <end position="73"/>
    </location>
</feature>
<feature type="transmembrane region" description="Helical" evidence="1">
    <location>
        <begin position="91"/>
        <end position="111"/>
    </location>
</feature>
<feature type="transmembrane region" description="Helical" evidence="1">
    <location>
        <begin position="139"/>
        <end position="159"/>
    </location>
</feature>
<feature type="transmembrane region" description="Helical" evidence="1">
    <location>
        <begin position="164"/>
        <end position="184"/>
    </location>
</feature>
<feature type="transmembrane region" description="Helical" evidence="1">
    <location>
        <begin position="195"/>
        <end position="213"/>
    </location>
</feature>
<feature type="transmembrane region" description="Helical" evidence="1">
    <location>
        <begin position="227"/>
        <end position="247"/>
    </location>
</feature>
<feature type="transmembrane region" description="Helical" evidence="1">
    <location>
        <begin position="257"/>
        <end position="277"/>
    </location>
</feature>
<feature type="transmembrane region" description="Helical" evidence="1">
    <location>
        <begin position="281"/>
        <end position="301"/>
    </location>
</feature>
<feature type="transmembrane region" description="Helical" evidence="1">
    <location>
        <begin position="304"/>
        <end position="324"/>
    </location>
</feature>
<feature type="transmembrane region" description="Helical" evidence="1">
    <location>
        <begin position="352"/>
        <end position="372"/>
    </location>
</feature>
<feature type="transmembrane region" description="Helical" evidence="1">
    <location>
        <begin position="373"/>
        <end position="393"/>
    </location>
</feature>
<gene>
    <name evidence="1" type="primary">lplT</name>
    <name type="ordered locus">SNSL254_A3237</name>
</gene>
<evidence type="ECO:0000255" key="1">
    <source>
        <dbReference type="HAMAP-Rule" id="MF_01585"/>
    </source>
</evidence>
<sequence>MSESVRTNTSIWSKGMLSVIVAQFLSAFGDNALLFATLALLKAQFYPDWSQPVLQMVFVGAYILFAPFVGQIADSFAKGRVMMVANGLKLAGAAGICLGINPFVGYTLVGIGAAAYSPAKYGILGELTTGDKLVKANGLMEASTIAAILLGSVAGGVLADWHVIAALVACALAYAGAVAANLFIPKLVAARPGQSWRLSAMTRSFFSACVVLWRNGETRFSLVGTGLFWGAGVTLRFLLVLWVPVALGITDNATPTYLNAMVAVGIVVGAGAAAKLVTLETVSRCMPAGILIGVVVAIFSLQHALLPAYALLLLIGMLGGFFVVPLNALLQERGKKSVGAGNAIAVQNLGENSAMLLMLGLYSLAVLVGVPAVAIGIGFGVLFALAIAALWIWQRRQASY</sequence>
<reference key="1">
    <citation type="journal article" date="2011" name="J. Bacteriol.">
        <title>Comparative genomics of 28 Salmonella enterica isolates: evidence for CRISPR-mediated adaptive sublineage evolution.</title>
        <authorList>
            <person name="Fricke W.F."/>
            <person name="Mammel M.K."/>
            <person name="McDermott P.F."/>
            <person name="Tartera C."/>
            <person name="White D.G."/>
            <person name="Leclerc J.E."/>
            <person name="Ravel J."/>
            <person name="Cebula T.A."/>
        </authorList>
    </citation>
    <scope>NUCLEOTIDE SEQUENCE [LARGE SCALE GENOMIC DNA]</scope>
    <source>
        <strain>SL254</strain>
    </source>
</reference>
<comment type="function">
    <text evidence="1">Catalyzes the facilitated diffusion of 2-acyl-glycero-3-phosphoethanolamine (2-acyl-GPE) into the cell.</text>
</comment>
<comment type="subcellular location">
    <subcellularLocation>
        <location evidence="1">Cell inner membrane</location>
        <topology evidence="1">Multi-pass membrane protein</topology>
    </subcellularLocation>
</comment>
<comment type="similarity">
    <text evidence="1">Belongs to the major facilitator superfamily. LplT (TC 2.A.1.42) family.</text>
</comment>
<protein>
    <recommendedName>
        <fullName evidence="1">Lysophospholipid transporter LplT</fullName>
    </recommendedName>
</protein>
<organism>
    <name type="scientific">Salmonella newport (strain SL254)</name>
    <dbReference type="NCBI Taxonomy" id="423368"/>
    <lineage>
        <taxon>Bacteria</taxon>
        <taxon>Pseudomonadati</taxon>
        <taxon>Pseudomonadota</taxon>
        <taxon>Gammaproteobacteria</taxon>
        <taxon>Enterobacterales</taxon>
        <taxon>Enterobacteriaceae</taxon>
        <taxon>Salmonella</taxon>
    </lineage>
</organism>
<accession>B4T502</accession>
<name>LPLT_SALNS</name>
<keyword id="KW-0997">Cell inner membrane</keyword>
<keyword id="KW-1003">Cell membrane</keyword>
<keyword id="KW-0445">Lipid transport</keyword>
<keyword id="KW-0472">Membrane</keyword>
<keyword id="KW-0812">Transmembrane</keyword>
<keyword id="KW-1133">Transmembrane helix</keyword>
<keyword id="KW-0813">Transport</keyword>
<dbReference type="EMBL" id="CP001113">
    <property type="protein sequence ID" value="ACF61465.1"/>
    <property type="molecule type" value="Genomic_DNA"/>
</dbReference>
<dbReference type="RefSeq" id="WP_000004679.1">
    <property type="nucleotide sequence ID" value="NZ_CCMR01000001.1"/>
</dbReference>
<dbReference type="SMR" id="B4T502"/>
<dbReference type="KEGG" id="see:SNSL254_A3237"/>
<dbReference type="HOGENOM" id="CLU_047399_0_0_6"/>
<dbReference type="Proteomes" id="UP000008824">
    <property type="component" value="Chromosome"/>
</dbReference>
<dbReference type="GO" id="GO:0005886">
    <property type="term" value="C:plasma membrane"/>
    <property type="evidence" value="ECO:0007669"/>
    <property type="project" value="UniProtKB-SubCell"/>
</dbReference>
<dbReference type="GO" id="GO:0051978">
    <property type="term" value="F:lysophospholipid:sodium symporter activity"/>
    <property type="evidence" value="ECO:0007669"/>
    <property type="project" value="InterPro"/>
</dbReference>
<dbReference type="CDD" id="cd06173">
    <property type="entry name" value="MFS_MefA_like"/>
    <property type="match status" value="1"/>
</dbReference>
<dbReference type="Gene3D" id="1.20.1250.20">
    <property type="entry name" value="MFS general substrate transporter like domains"/>
    <property type="match status" value="1"/>
</dbReference>
<dbReference type="HAMAP" id="MF_01585">
    <property type="entry name" value="MFS_LplT"/>
    <property type="match status" value="1"/>
</dbReference>
<dbReference type="InterPro" id="IPR023727">
    <property type="entry name" value="LysoPLipid__transptr_LplT"/>
</dbReference>
<dbReference type="InterPro" id="IPR011701">
    <property type="entry name" value="MFS"/>
</dbReference>
<dbReference type="InterPro" id="IPR036259">
    <property type="entry name" value="MFS_trans_sf"/>
</dbReference>
<dbReference type="NCBIfam" id="NF008397">
    <property type="entry name" value="PRK11195.1"/>
    <property type="match status" value="1"/>
</dbReference>
<dbReference type="PANTHER" id="PTHR43266">
    <property type="entry name" value="MACROLIDE-EFFLUX PROTEIN"/>
    <property type="match status" value="1"/>
</dbReference>
<dbReference type="PANTHER" id="PTHR43266:SF2">
    <property type="entry name" value="MAJOR FACILITATOR SUPERFAMILY (MFS) PROFILE DOMAIN-CONTAINING PROTEIN"/>
    <property type="match status" value="1"/>
</dbReference>
<dbReference type="Pfam" id="PF07690">
    <property type="entry name" value="MFS_1"/>
    <property type="match status" value="1"/>
</dbReference>
<dbReference type="SUPFAM" id="SSF103473">
    <property type="entry name" value="MFS general substrate transporter"/>
    <property type="match status" value="1"/>
</dbReference>